<feature type="initiator methionine" description="Removed" evidence="2">
    <location>
        <position position="1"/>
    </location>
</feature>
<feature type="chain" id="PRO_0000072599" description="Toluene-4-monooxygenase system, hydroxylase component subunit alpha">
    <location>
        <begin position="2"/>
        <end position="500"/>
    </location>
</feature>
<feature type="binding site" evidence="3 4 5 7 8 9 17 18 19 20 21 22 23 24 25 26 27 28 29">
    <location>
        <position position="104"/>
    </location>
    <ligand>
        <name>Fe cation</name>
        <dbReference type="ChEBI" id="CHEBI:24875"/>
        <label>1</label>
        <note>catalytic</note>
    </ligand>
</feature>
<feature type="binding site" evidence="3 4 5 7 8 9 17 18 19 20 21 22 23 24 25 26 27 28 29">
    <location>
        <position position="134"/>
    </location>
    <ligand>
        <name>Fe cation</name>
        <dbReference type="ChEBI" id="CHEBI:24875"/>
        <label>1</label>
        <note>catalytic</note>
    </ligand>
</feature>
<feature type="binding site" evidence="3 4 5 7 8 9 17 18 19 20 21 22 23 24 25 26 27 28 29">
    <location>
        <position position="134"/>
    </location>
    <ligand>
        <name>Fe cation</name>
        <dbReference type="ChEBI" id="CHEBI:24875"/>
        <label>2</label>
        <note>catalytic</note>
    </ligand>
</feature>
<feature type="binding site" evidence="3 4 5 7 8 9 17 18 19 20 21 22 23 24 25 26 27 28 29">
    <location>
        <position position="137"/>
    </location>
    <ligand>
        <name>Fe cation</name>
        <dbReference type="ChEBI" id="CHEBI:24875"/>
        <label>1</label>
        <note>catalytic</note>
    </ligand>
</feature>
<feature type="binding site" evidence="3 4 5 7 8 9 17 18 19 20 21 22 23 24 25 26 27 28 29">
    <location>
        <position position="197"/>
    </location>
    <ligand>
        <name>Fe cation</name>
        <dbReference type="ChEBI" id="CHEBI:24875"/>
        <label>2</label>
        <note>catalytic</note>
    </ligand>
</feature>
<feature type="binding site" evidence="3 4 5 16">
    <location>
        <position position="231"/>
    </location>
    <ligand>
        <name>Fe cation</name>
        <dbReference type="ChEBI" id="CHEBI:24875"/>
        <label>1</label>
        <note>catalytic</note>
    </ligand>
</feature>
<feature type="binding site" evidence="3 4 5 7 8 9 17 18 19 20 21 22 23 24 25 26 27 28 29">
    <location>
        <position position="231"/>
    </location>
    <ligand>
        <name>Fe cation</name>
        <dbReference type="ChEBI" id="CHEBI:24875"/>
        <label>2</label>
        <note>catalytic</note>
    </ligand>
</feature>
<feature type="binding site" evidence="3 4 5 7 8 9 17 18 19 20 21 22 23 24 25 26 27 28 29">
    <location>
        <position position="234"/>
    </location>
    <ligand>
        <name>Fe cation</name>
        <dbReference type="ChEBI" id="CHEBI:24875"/>
        <label>2</label>
        <note>catalytic</note>
    </ligand>
</feature>
<feature type="mutagenesis site" description="Increases production of m-cresol, instread of p-cresol." evidence="5 7">
    <original>G</original>
    <variation>L</variation>
    <location>
        <position position="103"/>
    </location>
</feature>
<feature type="mutagenesis site" description="Strongly increases consumption of dioxygen in the absence of bound substrate." evidence="4">
    <original>T</original>
    <variation>A</variation>
    <location>
        <position position="201"/>
    </location>
</feature>
<feature type="mutagenesis site" description="Shows a strong decrease in the catalytic efficiency for hydroxylation and only a minor change in the affinity for toluene." evidence="9">
    <original>Q</original>
    <variation>A</variation>
    <location>
        <position position="228"/>
    </location>
</feature>
<feature type="sequence conflict" description="In Ref. 1; AAA25999." evidence="12" ref="1">
    <original>WY</original>
    <variation>LD</variation>
    <location>
        <begin position="336"/>
        <end position="337"/>
    </location>
</feature>
<feature type="helix" evidence="31">
    <location>
        <begin position="6"/>
        <end position="13"/>
    </location>
</feature>
<feature type="strand" evidence="31">
    <location>
        <begin position="21"/>
        <end position="23"/>
    </location>
</feature>
<feature type="helix" evidence="31">
    <location>
        <begin position="25"/>
        <end position="28"/>
    </location>
</feature>
<feature type="helix" evidence="31">
    <location>
        <begin position="31"/>
        <end position="34"/>
    </location>
</feature>
<feature type="helix" evidence="31">
    <location>
        <begin position="41"/>
        <end position="44"/>
    </location>
</feature>
<feature type="helix" evidence="31">
    <location>
        <begin position="55"/>
        <end position="76"/>
    </location>
</feature>
<feature type="helix" evidence="32">
    <location>
        <begin position="77"/>
        <end position="79"/>
    </location>
</feature>
<feature type="helix" evidence="31">
    <location>
        <begin position="81"/>
        <end position="84"/>
    </location>
</feature>
<feature type="helix" evidence="31">
    <location>
        <begin position="87"/>
        <end position="117"/>
    </location>
</feature>
<feature type="helix" evidence="31">
    <location>
        <begin position="121"/>
        <end position="146"/>
    </location>
</feature>
<feature type="turn" evidence="31">
    <location>
        <begin position="147"/>
        <end position="151"/>
    </location>
</feature>
<feature type="helix" evidence="31">
    <location>
        <begin position="153"/>
        <end position="156"/>
    </location>
</feature>
<feature type="helix" evidence="31">
    <location>
        <begin position="157"/>
        <end position="160"/>
    </location>
</feature>
<feature type="helix" evidence="31">
    <location>
        <begin position="161"/>
        <end position="163"/>
    </location>
</feature>
<feature type="helix" evidence="31">
    <location>
        <begin position="167"/>
        <end position="179"/>
    </location>
</feature>
<feature type="helix" evidence="31">
    <location>
        <begin position="185"/>
        <end position="191"/>
    </location>
</feature>
<feature type="helix" evidence="31">
    <location>
        <begin position="193"/>
        <end position="199"/>
    </location>
</feature>
<feature type="helix" evidence="31">
    <location>
        <begin position="201"/>
        <end position="205"/>
    </location>
</feature>
<feature type="helix" evidence="31">
    <location>
        <begin position="207"/>
        <end position="214"/>
    </location>
</feature>
<feature type="helix" evidence="31">
    <location>
        <begin position="218"/>
        <end position="234"/>
    </location>
</feature>
<feature type="helix" evidence="31">
    <location>
        <begin position="235"/>
        <end position="237"/>
    </location>
</feature>
<feature type="helix" evidence="31">
    <location>
        <begin position="238"/>
        <end position="247"/>
    </location>
</feature>
<feature type="helix" evidence="31">
    <location>
        <begin position="251"/>
        <end position="278"/>
    </location>
</feature>
<feature type="helix" evidence="31">
    <location>
        <begin position="283"/>
        <end position="285"/>
    </location>
</feature>
<feature type="helix" evidence="31">
    <location>
        <begin position="290"/>
        <end position="297"/>
    </location>
</feature>
<feature type="turn" evidence="31">
    <location>
        <begin position="298"/>
        <end position="301"/>
    </location>
</feature>
<feature type="helix" evidence="31">
    <location>
        <begin position="302"/>
        <end position="308"/>
    </location>
</feature>
<feature type="helix" evidence="31">
    <location>
        <begin position="317"/>
        <end position="337"/>
    </location>
</feature>
<feature type="helix" evidence="31">
    <location>
        <begin position="339"/>
        <end position="341"/>
    </location>
</feature>
<feature type="strand" evidence="31">
    <location>
        <begin position="342"/>
        <end position="344"/>
    </location>
</feature>
<feature type="helix" evidence="31">
    <location>
        <begin position="352"/>
        <end position="361"/>
    </location>
</feature>
<feature type="helix" evidence="31">
    <location>
        <begin position="365"/>
        <end position="367"/>
    </location>
</feature>
<feature type="helix" evidence="31">
    <location>
        <begin position="369"/>
        <end position="381"/>
    </location>
</feature>
<feature type="helix" evidence="31">
    <location>
        <begin position="385"/>
        <end position="388"/>
    </location>
</feature>
<feature type="turn" evidence="31">
    <location>
        <begin position="398"/>
        <end position="400"/>
    </location>
</feature>
<feature type="strand" evidence="30">
    <location>
        <begin position="405"/>
        <end position="407"/>
    </location>
</feature>
<feature type="helix" evidence="31">
    <location>
        <begin position="409"/>
        <end position="411"/>
    </location>
</feature>
<feature type="strand" evidence="31">
    <location>
        <begin position="417"/>
        <end position="421"/>
    </location>
</feature>
<feature type="strand" evidence="31">
    <location>
        <begin position="424"/>
        <end position="430"/>
    </location>
</feature>
<feature type="helix" evidence="31">
    <location>
        <begin position="431"/>
        <end position="439"/>
    </location>
</feature>
<feature type="helix" evidence="31">
    <location>
        <begin position="441"/>
        <end position="444"/>
    </location>
</feature>
<feature type="helix" evidence="31">
    <location>
        <begin position="450"/>
        <end position="455"/>
    </location>
</feature>
<feature type="strand" evidence="31">
    <location>
        <begin position="459"/>
        <end position="463"/>
    </location>
</feature>
<feature type="helix" evidence="31">
    <location>
        <begin position="464"/>
        <end position="470"/>
    </location>
</feature>
<feature type="helix" evidence="31">
    <location>
        <begin position="476"/>
        <end position="478"/>
    </location>
</feature>
<feature type="turn" evidence="31">
    <location>
        <begin position="483"/>
        <end position="486"/>
    </location>
</feature>
<feature type="helix" evidence="31">
    <location>
        <begin position="487"/>
        <end position="491"/>
    </location>
</feature>
<proteinExistence type="evidence at protein level"/>
<dbReference type="EC" id="1.14.13.236" evidence="1 4 5 14"/>
<dbReference type="EMBL" id="M65106">
    <property type="protein sequence ID" value="AAA25999.1"/>
    <property type="molecule type" value="Genomic_DNA"/>
</dbReference>
<dbReference type="EMBL" id="AY552601">
    <property type="protein sequence ID" value="AAS66660.1"/>
    <property type="molecule type" value="Genomic_DNA"/>
</dbReference>
<dbReference type="PDB" id="3DHG">
    <property type="method" value="X-ray"/>
    <property type="resolution" value="1.85 A"/>
    <property type="chains" value="A/D=1-500"/>
</dbReference>
<dbReference type="PDB" id="3DHH">
    <property type="method" value="X-ray"/>
    <property type="resolution" value="1.94 A"/>
    <property type="chains" value="A=1-500"/>
</dbReference>
<dbReference type="PDB" id="3DHI">
    <property type="method" value="X-ray"/>
    <property type="resolution" value="1.68 A"/>
    <property type="chains" value="A=1-500"/>
</dbReference>
<dbReference type="PDB" id="3GE3">
    <property type="method" value="X-ray"/>
    <property type="resolution" value="1.52 A"/>
    <property type="chains" value="A=1-500"/>
</dbReference>
<dbReference type="PDB" id="3GE8">
    <property type="method" value="X-ray"/>
    <property type="resolution" value="2.19 A"/>
    <property type="chains" value="A/D=1-500"/>
</dbReference>
<dbReference type="PDB" id="3I5J">
    <property type="method" value="X-ray"/>
    <property type="resolution" value="1.90 A"/>
    <property type="chains" value="A=1-500"/>
</dbReference>
<dbReference type="PDB" id="3I63">
    <property type="method" value="X-ray"/>
    <property type="resolution" value="2.09 A"/>
    <property type="chains" value="A=1-500"/>
</dbReference>
<dbReference type="PDB" id="3Q14">
    <property type="method" value="X-ray"/>
    <property type="resolution" value="1.75 A"/>
    <property type="chains" value="A=1-500"/>
</dbReference>
<dbReference type="PDB" id="3Q2A">
    <property type="method" value="X-ray"/>
    <property type="resolution" value="1.99 A"/>
    <property type="chains" value="A=1-500"/>
</dbReference>
<dbReference type="PDB" id="3Q3M">
    <property type="method" value="X-ray"/>
    <property type="resolution" value="1.75 A"/>
    <property type="chains" value="A/D=1-500"/>
</dbReference>
<dbReference type="PDB" id="3Q3N">
    <property type="method" value="X-ray"/>
    <property type="resolution" value="1.84 A"/>
    <property type="chains" value="A=1-500"/>
</dbReference>
<dbReference type="PDB" id="3Q3O">
    <property type="method" value="X-ray"/>
    <property type="resolution" value="1.95 A"/>
    <property type="chains" value="A=1-500"/>
</dbReference>
<dbReference type="PDB" id="3RI7">
    <property type="method" value="X-ray"/>
    <property type="resolution" value="2.10 A"/>
    <property type="chains" value="A=2-493"/>
</dbReference>
<dbReference type="PDB" id="3RMK">
    <property type="method" value="X-ray"/>
    <property type="resolution" value="1.95 A"/>
    <property type="chains" value="A/D=2-493"/>
</dbReference>
<dbReference type="PDB" id="4P1B">
    <property type="method" value="X-ray"/>
    <property type="resolution" value="2.05 A"/>
    <property type="chains" value="A/D=2-491"/>
</dbReference>
<dbReference type="PDB" id="4P1C">
    <property type="method" value="X-ray"/>
    <property type="resolution" value="2.40 A"/>
    <property type="chains" value="A/D=2-491"/>
</dbReference>
<dbReference type="PDB" id="5TDS">
    <property type="method" value="X-ray"/>
    <property type="resolution" value="1.72 A"/>
    <property type="chains" value="A/D=1-493"/>
</dbReference>
<dbReference type="PDB" id="5TDT">
    <property type="method" value="X-ray"/>
    <property type="resolution" value="1.82 A"/>
    <property type="chains" value="A/D=1-493"/>
</dbReference>
<dbReference type="PDB" id="5TDU">
    <property type="method" value="X-ray"/>
    <property type="resolution" value="1.74 A"/>
    <property type="chains" value="A=1-493"/>
</dbReference>
<dbReference type="PDB" id="5TDV">
    <property type="method" value="X-ray"/>
    <property type="resolution" value="2.00 A"/>
    <property type="chains" value="A/D=1-500"/>
</dbReference>
<dbReference type="PDBsum" id="3DHG"/>
<dbReference type="PDBsum" id="3DHH"/>
<dbReference type="PDBsum" id="3DHI"/>
<dbReference type="PDBsum" id="3GE3"/>
<dbReference type="PDBsum" id="3GE8"/>
<dbReference type="PDBsum" id="3I5J"/>
<dbReference type="PDBsum" id="3I63"/>
<dbReference type="PDBsum" id="3Q14"/>
<dbReference type="PDBsum" id="3Q2A"/>
<dbReference type="PDBsum" id="3Q3M"/>
<dbReference type="PDBsum" id="3Q3N"/>
<dbReference type="PDBsum" id="3Q3O"/>
<dbReference type="PDBsum" id="3RI7"/>
<dbReference type="PDBsum" id="3RMK"/>
<dbReference type="PDBsum" id="4P1B"/>
<dbReference type="PDBsum" id="4P1C"/>
<dbReference type="PDBsum" id="5TDS"/>
<dbReference type="PDBsum" id="5TDT"/>
<dbReference type="PDBsum" id="5TDU"/>
<dbReference type="PDBsum" id="5TDV"/>
<dbReference type="SMR" id="Q00456"/>
<dbReference type="DIP" id="DIP-48644N"/>
<dbReference type="IntAct" id="Q00456">
    <property type="interactions" value="3"/>
</dbReference>
<dbReference type="KEGG" id="ag:AAA25999"/>
<dbReference type="BioCyc" id="MetaCyc:MONOMER-2506"/>
<dbReference type="BRENDA" id="1.14.13.236">
    <property type="organism ID" value="31258"/>
</dbReference>
<dbReference type="UniPathway" id="UPA00273"/>
<dbReference type="EvolutionaryTrace" id="Q00456"/>
<dbReference type="GO" id="GO:0046872">
    <property type="term" value="F:metal ion binding"/>
    <property type="evidence" value="ECO:0007669"/>
    <property type="project" value="UniProtKB-KW"/>
</dbReference>
<dbReference type="GO" id="GO:0018638">
    <property type="term" value="F:toluene 4-monooxygenase activity"/>
    <property type="evidence" value="ECO:0007669"/>
    <property type="project" value="UniProtKB-EC"/>
</dbReference>
<dbReference type="GO" id="GO:0042203">
    <property type="term" value="P:toluene catabolic process"/>
    <property type="evidence" value="ECO:0007669"/>
    <property type="project" value="UniProtKB-UniPathway"/>
</dbReference>
<dbReference type="CDD" id="cd01057">
    <property type="entry name" value="AAMH_A"/>
    <property type="match status" value="1"/>
</dbReference>
<dbReference type="Gene3D" id="1.10.620.20">
    <property type="entry name" value="Ribonucleotide Reductase, subunit A"/>
    <property type="match status" value="1"/>
</dbReference>
<dbReference type="InterPro" id="IPR009078">
    <property type="entry name" value="Ferritin-like_SF"/>
</dbReference>
<dbReference type="InterPro" id="IPR003430">
    <property type="entry name" value="Phenol_Hydrox"/>
</dbReference>
<dbReference type="InterPro" id="IPR012348">
    <property type="entry name" value="RNR-like"/>
</dbReference>
<dbReference type="Pfam" id="PF02332">
    <property type="entry name" value="Phenol_Hydrox"/>
    <property type="match status" value="1"/>
</dbReference>
<dbReference type="SUPFAM" id="SSF47240">
    <property type="entry name" value="Ferritin-like"/>
    <property type="match status" value="1"/>
</dbReference>
<keyword id="KW-0002">3D-structure</keyword>
<keyword id="KW-0058">Aromatic hydrocarbons catabolism</keyword>
<keyword id="KW-0903">Direct protein sequencing</keyword>
<keyword id="KW-0408">Iron</keyword>
<keyword id="KW-0479">Metal-binding</keyword>
<keyword id="KW-0503">Monooxygenase</keyword>
<keyword id="KW-0520">NAD</keyword>
<keyword id="KW-0560">Oxidoreductase</keyword>
<protein>
    <recommendedName>
        <fullName evidence="10">Toluene-4-monooxygenase system, hydroxylase component subunit alpha</fullName>
        <shortName evidence="11">T4MO</shortName>
        <ecNumber evidence="1 4 5 14">1.14.13.236</ecNumber>
    </recommendedName>
    <alternativeName>
        <fullName evidence="11">Toluene-4-monooxygenase hydroxylase subunit</fullName>
        <shortName evidence="11">T4moH</shortName>
    </alternativeName>
    <alternativeName>
        <fullName evidence="11">Toluene-4-monooxygenase system protein A</fullName>
        <shortName evidence="11">T4moA</shortName>
    </alternativeName>
</protein>
<name>TMOA_ECTME</name>
<gene>
    <name evidence="11" type="primary">tmoA</name>
</gene>
<reference key="1">
    <citation type="journal article" date="1991" name="J. Bacteriol.">
        <title>Cloning and characterization of a Pseudomonas mendocina KR1 gene cluster encoding toluene-4-monooxygenase.</title>
        <authorList>
            <person name="Yen K.-M."/>
            <person name="Karl M.R."/>
            <person name="Blatt L.M."/>
            <person name="Simon M.J."/>
            <person name="Winter R.B."/>
            <person name="Fausset P.R."/>
            <person name="Lu H.S."/>
            <person name="Harcourt A.A."/>
            <person name="Chen K.K."/>
        </authorList>
    </citation>
    <scope>NUCLEOTIDE SEQUENCE [GENOMIC DNA]</scope>
    <scope>PROTEIN SEQUENCE OF 2-14</scope>
    <scope>FUNCTION</scope>
    <scope>DISRUPTION PHENOTYPE</scope>
    <source>
        <strain>KR1</strain>
    </source>
</reference>
<reference key="2">
    <citation type="journal article" date="2004" name="Appl. Environ. Microbiol.">
        <title>Oxidation of benzene to phenol, catechol, and 1,2,3-trihydroxybenzene by toluene 4-monooxygenase of Pseudomonas mendocina KR1 and toluene 3-monooxygenase of Ralstonia pickettii PKO1.</title>
        <authorList>
            <person name="Tao Y."/>
            <person name="Fishman A."/>
            <person name="Bentley W.E."/>
            <person name="Wood T.K."/>
        </authorList>
    </citation>
    <scope>NUCLEOTIDE SEQUENCE [GENOMIC DNA]</scope>
    <scope>FUNCTION</scope>
    <scope>CATALYTIC ACTIVITY</scope>
    <scope>SUBSTRATE SPECIFICITY</scope>
    <scope>PATHWAY</scope>
    <source>
        <strain evidence="15">KR1</strain>
    </source>
</reference>
<reference key="3">
    <citation type="journal article" date="1991" name="J. Bacteriol.">
        <title>Toluene-4-monooxygenase, a three-component enzyme system that catalyzes the oxidation of toluene to p-cresol in Pseudomonas mendocina KR1.</title>
        <authorList>
            <person name="Whited G.M."/>
            <person name="Gibson D.T."/>
        </authorList>
    </citation>
    <scope>FUNCTION</scope>
    <scope>CATALYTIC ACTIVITY</scope>
    <scope>BIOPHYSICOCHEMICAL PROPERTIES</scope>
    <scope>ACTIVITY REGULATION</scope>
    <scope>COFACTOR</scope>
    <source>
        <strain>KR1</strain>
    </source>
</reference>
<reference key="4">
    <citation type="journal article" date="2008" name="Proc. Natl. Acad. Sci. U.S.A.">
        <title>Structural consequences of effector protein complex formation in a diiron hydroxylase.</title>
        <authorList>
            <person name="Bailey L.J."/>
            <person name="McCoy J.G."/>
            <person name="Phillips G.N. Jr."/>
            <person name="Fox B.G."/>
        </authorList>
    </citation>
    <scope>X-RAY CRYSTALLOGRAPHY (1.68 ANGSTROMS) IN COMPLEX WITH IRON</scope>
    <scope>COFACTOR</scope>
    <scope>SUBUNIT</scope>
</reference>
<reference key="5">
    <citation type="journal article" date="2009" name="Biochemistry">
        <title>Role for threonine 201 in the catalytic cycle of the soluble diiron hydroxylase toluene 4-monooxygenase.</title>
        <authorList>
            <person name="Elsen N.L."/>
            <person name="Bailey L.J."/>
            <person name="Hauser A.D."/>
            <person name="Fox B.G."/>
        </authorList>
    </citation>
    <scope>X-RAY CRYSTALLOGRAPHY (1.52 ANGSTROMS) IN COMPLEX WITH IRON</scope>
    <scope>FUNCTION</scope>
    <scope>COFACTOR</scope>
    <scope>CATALYTIC ACTIVITY</scope>
    <scope>MUTAGENESIS OF THR-201</scope>
    <scope>SUBUNIT</scope>
</reference>
<reference key="6">
    <citation type="journal article" date="2009" name="Biochemistry">
        <title>Crystallographic and catalytic studies of the peroxide-shunt reaction in a diiron hydroxylase.</title>
        <authorList>
            <person name="Bailey L.J."/>
            <person name="Fox B.G."/>
        </authorList>
    </citation>
    <scope>X-RAY CRYSTALLOGRAPHY (1.90 ANGSTROMS) IN COMPLEX WITH IRON</scope>
    <scope>FUNCTION</scope>
    <scope>CATALYTIC ACTIVITY</scope>
    <scope>COFACTOR</scope>
    <scope>MUTAGENESIS OF GLY-103</scope>
    <scope>SUBUNIT</scope>
</reference>
<reference key="7">
    <citation type="journal article" date="2012" name="Biochemistry">
        <title>Crystallographic analysis of active site contributions to regiospecificity in the diiron enzyme toluene 4-monooxygenase.</title>
        <authorList>
            <person name="Bailey L.J."/>
            <person name="Acheson J.F."/>
            <person name="McCoy J.G."/>
            <person name="Elsen N.L."/>
            <person name="Phillips G.N. Jr."/>
            <person name="Fox B.G."/>
        </authorList>
    </citation>
    <scope>X-RAY CRYSTALLOGRAPHY (1.75 ANGSTROMS) OF WILD-TYPE AND MUTANT LEU-103 IN COMPLEX WITH IRON</scope>
    <scope>MUTAGENESIS OF GLY-103</scope>
    <scope>COFACTOR</scope>
    <scope>SUBUNIT</scope>
    <source>
        <strain>KR1</strain>
    </source>
</reference>
<reference key="8">
    <citation type="journal article" date="2014" name="Nat. Commun.">
        <title>Structural basis for biomolecular recognition in overlapping binding sites in a diiron enzyme system.</title>
        <authorList>
            <person name="Acheson J.F."/>
            <person name="Bailey L.J."/>
            <person name="Elsen N.L."/>
            <person name="Fox B.G."/>
        </authorList>
    </citation>
    <scope>X-RAY CRYSTALLOGRAPHY (2.05 ANGSTROMS) OF 2-491 IN COMPLEX WITH IRON</scope>
    <scope>COFACTOR</scope>
    <scope>SUBUNIT</scope>
</reference>
<reference key="9">
    <citation type="journal article" date="2017" name="Nature">
        <title>In-crystal reaction cycle of a toluene-bound diiron hydroxylase.</title>
        <authorList>
            <person name="Acheson J.F."/>
            <person name="Bailey L.J."/>
            <person name="Brunold T.C."/>
            <person name="Fox B.G."/>
        </authorList>
    </citation>
    <scope>X-RAY CRYSTALLOGRAPHY (1.72 ANGSTROMS) OF 1-493 OF WILD-TYPE AND MUTANT ALA-228 IN COMPLEX WITH IRON</scope>
    <scope>MUTAGENESIS OF GLN-228</scope>
    <scope>COFACTOR</scope>
    <scope>SUBUNIT</scope>
</reference>
<accession>Q00456</accession>
<accession>Q6Q8Q7</accession>
<evidence type="ECO:0000269" key="1">
    <source>
    </source>
</evidence>
<evidence type="ECO:0000269" key="2">
    <source>
    </source>
</evidence>
<evidence type="ECO:0000269" key="3">
    <source>
    </source>
</evidence>
<evidence type="ECO:0000269" key="4">
    <source>
    </source>
</evidence>
<evidence type="ECO:0000269" key="5">
    <source>
    </source>
</evidence>
<evidence type="ECO:0000269" key="6">
    <source>
    </source>
</evidence>
<evidence type="ECO:0000269" key="7">
    <source>
    </source>
</evidence>
<evidence type="ECO:0000269" key="8">
    <source>
    </source>
</evidence>
<evidence type="ECO:0000269" key="9">
    <source>
    </source>
</evidence>
<evidence type="ECO:0000303" key="10">
    <source>
    </source>
</evidence>
<evidence type="ECO:0000303" key="11">
    <source>
    </source>
</evidence>
<evidence type="ECO:0000305" key="12"/>
<evidence type="ECO:0000305" key="13">
    <source>
    </source>
</evidence>
<evidence type="ECO:0000305" key="14">
    <source>
    </source>
</evidence>
<evidence type="ECO:0000312" key="15">
    <source>
        <dbReference type="EMBL" id="AAS66660.1"/>
    </source>
</evidence>
<evidence type="ECO:0007744" key="16">
    <source>
        <dbReference type="PDB" id="3DHI"/>
    </source>
</evidence>
<evidence type="ECO:0007744" key="17">
    <source>
        <dbReference type="PDB" id="3Q14"/>
    </source>
</evidence>
<evidence type="ECO:0007744" key="18">
    <source>
        <dbReference type="PDB" id="3Q2A"/>
    </source>
</evidence>
<evidence type="ECO:0007744" key="19">
    <source>
        <dbReference type="PDB" id="3Q3M"/>
    </source>
</evidence>
<evidence type="ECO:0007744" key="20">
    <source>
        <dbReference type="PDB" id="3Q3N"/>
    </source>
</evidence>
<evidence type="ECO:0007744" key="21">
    <source>
        <dbReference type="PDB" id="3Q3O"/>
    </source>
</evidence>
<evidence type="ECO:0007744" key="22">
    <source>
        <dbReference type="PDB" id="3RI7"/>
    </source>
</evidence>
<evidence type="ECO:0007744" key="23">
    <source>
        <dbReference type="PDB" id="3RMK"/>
    </source>
</evidence>
<evidence type="ECO:0007744" key="24">
    <source>
        <dbReference type="PDB" id="4P1B"/>
    </source>
</evidence>
<evidence type="ECO:0007744" key="25">
    <source>
        <dbReference type="PDB" id="4P1C"/>
    </source>
</evidence>
<evidence type="ECO:0007744" key="26">
    <source>
        <dbReference type="PDB" id="5TDS"/>
    </source>
</evidence>
<evidence type="ECO:0007744" key="27">
    <source>
        <dbReference type="PDB" id="5TDT"/>
    </source>
</evidence>
<evidence type="ECO:0007744" key="28">
    <source>
        <dbReference type="PDB" id="5TDU"/>
    </source>
</evidence>
<evidence type="ECO:0007744" key="29">
    <source>
        <dbReference type="PDB" id="5TDV"/>
    </source>
</evidence>
<evidence type="ECO:0007829" key="30">
    <source>
        <dbReference type="PDB" id="3DHI"/>
    </source>
</evidence>
<evidence type="ECO:0007829" key="31">
    <source>
        <dbReference type="PDB" id="3GE3"/>
    </source>
</evidence>
<evidence type="ECO:0007829" key="32">
    <source>
        <dbReference type="PDB" id="5TDS"/>
    </source>
</evidence>
<comment type="function">
    <text evidence="1 2 4 5 6">Component of the toluene-4-monooxygenase multicomponent enzyme system which catalyzes the O2- and NADH-dependent hydroxylation of toluene to form p-cresol (PubMed:15240250, PubMed:1885512, PubMed:19290655, PubMed:19705873, PubMed:2019563). Also able to convert benzene to phenol, catechol, and 1,2,3-trihydroxybenzene by successive hydroxylations (PubMed:15240250).</text>
</comment>
<comment type="catalytic activity">
    <reaction evidence="1 4 5 14">
        <text>toluene + NADH + O2 + H(+) = 4-methylphenol + NAD(+) + H2O</text>
        <dbReference type="Rhea" id="RHEA:41380"/>
        <dbReference type="ChEBI" id="CHEBI:15377"/>
        <dbReference type="ChEBI" id="CHEBI:15378"/>
        <dbReference type="ChEBI" id="CHEBI:15379"/>
        <dbReference type="ChEBI" id="CHEBI:17578"/>
        <dbReference type="ChEBI" id="CHEBI:17847"/>
        <dbReference type="ChEBI" id="CHEBI:57540"/>
        <dbReference type="ChEBI" id="CHEBI:57945"/>
        <dbReference type="EC" id="1.14.13.236"/>
    </reaction>
</comment>
<comment type="cofactor">
    <cofactor evidence="3 4 5 7 8 9 14">
        <name>Fe(2+)</name>
        <dbReference type="ChEBI" id="CHEBI:29033"/>
    </cofactor>
    <text evidence="3 4 5 7 8 9">Binds 2 Fe(2+) ions per subunit.</text>
</comment>
<comment type="activity regulation">
    <text evidence="6">Inhibited by Zn(2+) and Cu(2+).</text>
</comment>
<comment type="biophysicochemical properties">
    <phDependence>
        <text evidence="6">Optimum pH is 6.8.</text>
    </phDependence>
</comment>
<comment type="pathway">
    <text evidence="13">Xenobiotic degradation; toluene degradation.</text>
</comment>
<comment type="subunit">
    <text evidence="3 4 5 7 8 9">The alkene monooxygenase multicomponent enzyme system is composed of an electron transfer component and a monooxygenase component interacting with the effector protein TmoD. The electron transfer component is composed of a ferredoxin reductase (TmoF) and a ferredoxin (TmoC), and the monooxygenase component is formed by a heterohexamer (dimer of heterotrimers) of two alpha subunits (TmoA), two beta subunits (TmoE) and two gamma subunits (TmoB).</text>
</comment>
<comment type="disruption phenotype">
    <text evidence="2">Cells lacking this gene show a complete loss of toluene-4-monooxygenase activity.</text>
</comment>
<comment type="similarity">
    <text evidence="12">Belongs to the TmoA/XamoA family.</text>
</comment>
<organism>
    <name type="scientific">Ectopseudomonas mendocina</name>
    <name type="common">Pseudomonas mendocina</name>
    <dbReference type="NCBI Taxonomy" id="300"/>
    <lineage>
        <taxon>Bacteria</taxon>
        <taxon>Pseudomonadati</taxon>
        <taxon>Pseudomonadota</taxon>
        <taxon>Gammaproteobacteria</taxon>
        <taxon>Pseudomonadales</taxon>
        <taxon>Pseudomonadaceae</taxon>
        <taxon>Ectopseudomonas</taxon>
    </lineage>
</organism>
<sequence length="500" mass="58104">MAMHPRKDWYELTRATNWTPSYVTEEQLFPERMSGHMGIPLEKWESYDEPYKTSYPEYVSIQREKDAGAYSVKAALERAKIYENSDPGWISTLKSHYGAIAVGEYAAVTGEGRMARFSKAPGNRNMATFGMMDELRHGQLQLFFPHEYCKKDRQFDWAWRAYHSNEWAAIAAKHFFDDIITGRDAISVAIMLTFSFETGFTNMQFLGLAADAAEAGDYTFANLISSIQTDESRHAQQGGPALQLLIENGKREEAQKKVDMAIWRAWRLFAVLTGPVMDYYTPLEDRSQSFKEFMYEWIIGQFERSLIDLGLDKPWYWDLFLKDIDELHHSYHMGVWYWRTTAWWNPAAGVTPEERDWLEEKYPGWNKRWGRCWDVITENVLNDRMDLVSPETLPSVCNMSQIPLVGVPGDDWNIEVFSLEHNGRLYHFGSEVDRWVFQQDPVQYQNHMNIVDRFLAGQIQPMTLEGALKYMGFQSIEEMGKDAHDFAWADKCKPAMKKSA</sequence>